<comment type="function">
    <text evidence="1">DNA-dependent RNA polymerase catalyzes the transcription of DNA into RNA using the four ribonucleoside triphosphates as substrates.</text>
</comment>
<comment type="catalytic activity">
    <reaction evidence="1">
        <text>RNA(n) + a ribonucleoside 5'-triphosphate = RNA(n+1) + diphosphate</text>
        <dbReference type="Rhea" id="RHEA:21248"/>
        <dbReference type="Rhea" id="RHEA-COMP:14527"/>
        <dbReference type="Rhea" id="RHEA-COMP:17342"/>
        <dbReference type="ChEBI" id="CHEBI:33019"/>
        <dbReference type="ChEBI" id="CHEBI:61557"/>
        <dbReference type="ChEBI" id="CHEBI:140395"/>
        <dbReference type="EC" id="2.7.7.6"/>
    </reaction>
</comment>
<comment type="subunit">
    <text evidence="1">The RNAP catalytic core consists of 2 alpha, 1 beta, 1 beta' and 1 omega subunit. When a sigma factor is associated with the core the holoenzyme is formed, which can initiate transcription.</text>
</comment>
<comment type="similarity">
    <text evidence="1">Belongs to the RNA polymerase beta chain family.</text>
</comment>
<proteinExistence type="inferred from homology"/>
<gene>
    <name evidence="1" type="primary">rpoB</name>
    <name type="ordered locus">NIS_0268</name>
</gene>
<dbReference type="EC" id="2.7.7.6" evidence="1"/>
<dbReference type="EMBL" id="AP009178">
    <property type="protein sequence ID" value="BAF69382.1"/>
    <property type="molecule type" value="Genomic_DNA"/>
</dbReference>
<dbReference type="RefSeq" id="WP_012081645.1">
    <property type="nucleotide sequence ID" value="NC_009662.1"/>
</dbReference>
<dbReference type="SMR" id="A6Q1M3"/>
<dbReference type="FunCoup" id="A6Q1M3">
    <property type="interactions" value="447"/>
</dbReference>
<dbReference type="STRING" id="387092.NIS_0268"/>
<dbReference type="KEGG" id="nis:NIS_0268"/>
<dbReference type="eggNOG" id="COG0085">
    <property type="taxonomic scope" value="Bacteria"/>
</dbReference>
<dbReference type="HOGENOM" id="CLU_000524_4_0_7"/>
<dbReference type="InParanoid" id="A6Q1M3"/>
<dbReference type="OrthoDB" id="9803954at2"/>
<dbReference type="Proteomes" id="UP000001118">
    <property type="component" value="Chromosome"/>
</dbReference>
<dbReference type="GO" id="GO:0000428">
    <property type="term" value="C:DNA-directed RNA polymerase complex"/>
    <property type="evidence" value="ECO:0007669"/>
    <property type="project" value="UniProtKB-KW"/>
</dbReference>
<dbReference type="GO" id="GO:0003677">
    <property type="term" value="F:DNA binding"/>
    <property type="evidence" value="ECO:0007669"/>
    <property type="project" value="UniProtKB-UniRule"/>
</dbReference>
<dbReference type="GO" id="GO:0003899">
    <property type="term" value="F:DNA-directed RNA polymerase activity"/>
    <property type="evidence" value="ECO:0007669"/>
    <property type="project" value="UniProtKB-UniRule"/>
</dbReference>
<dbReference type="GO" id="GO:0032549">
    <property type="term" value="F:ribonucleoside binding"/>
    <property type="evidence" value="ECO:0007669"/>
    <property type="project" value="InterPro"/>
</dbReference>
<dbReference type="GO" id="GO:0006351">
    <property type="term" value="P:DNA-templated transcription"/>
    <property type="evidence" value="ECO:0007669"/>
    <property type="project" value="UniProtKB-UniRule"/>
</dbReference>
<dbReference type="CDD" id="cd00653">
    <property type="entry name" value="RNA_pol_B_RPB2"/>
    <property type="match status" value="1"/>
</dbReference>
<dbReference type="Gene3D" id="2.40.50.100">
    <property type="match status" value="1"/>
</dbReference>
<dbReference type="Gene3D" id="2.40.50.150">
    <property type="match status" value="1"/>
</dbReference>
<dbReference type="Gene3D" id="3.90.1100.10">
    <property type="match status" value="2"/>
</dbReference>
<dbReference type="Gene3D" id="2.30.150.10">
    <property type="entry name" value="DNA-directed RNA polymerase, beta subunit, external 1 domain"/>
    <property type="match status" value="1"/>
</dbReference>
<dbReference type="Gene3D" id="2.40.270.10">
    <property type="entry name" value="DNA-directed RNA polymerase, subunit 2, domain 6"/>
    <property type="match status" value="2"/>
</dbReference>
<dbReference type="Gene3D" id="3.90.1800.10">
    <property type="entry name" value="RNA polymerase alpha subunit dimerisation domain"/>
    <property type="match status" value="1"/>
</dbReference>
<dbReference type="Gene3D" id="3.90.1110.10">
    <property type="entry name" value="RNA polymerase Rpb2, domain 2"/>
    <property type="match status" value="2"/>
</dbReference>
<dbReference type="HAMAP" id="MF_01321">
    <property type="entry name" value="RNApol_bact_RpoB"/>
    <property type="match status" value="1"/>
</dbReference>
<dbReference type="InterPro" id="IPR042107">
    <property type="entry name" value="DNA-dir_RNA_pol_bsu_ext_1_sf"/>
</dbReference>
<dbReference type="InterPro" id="IPR019462">
    <property type="entry name" value="DNA-dir_RNA_pol_bsu_external_1"/>
</dbReference>
<dbReference type="InterPro" id="IPR015712">
    <property type="entry name" value="DNA-dir_RNA_pol_su2"/>
</dbReference>
<dbReference type="InterPro" id="IPR007120">
    <property type="entry name" value="DNA-dir_RNAP_su2_dom"/>
</dbReference>
<dbReference type="InterPro" id="IPR037033">
    <property type="entry name" value="DNA-dir_RNAP_su2_hyb_sf"/>
</dbReference>
<dbReference type="InterPro" id="IPR010243">
    <property type="entry name" value="RNA_pol_bsu_bac"/>
</dbReference>
<dbReference type="InterPro" id="IPR007121">
    <property type="entry name" value="RNA_pol_bsu_CS"/>
</dbReference>
<dbReference type="InterPro" id="IPR007644">
    <property type="entry name" value="RNA_pol_bsu_protrusion"/>
</dbReference>
<dbReference type="InterPro" id="IPR007642">
    <property type="entry name" value="RNA_pol_Rpb2_2"/>
</dbReference>
<dbReference type="InterPro" id="IPR037034">
    <property type="entry name" value="RNA_pol_Rpb2_2_sf"/>
</dbReference>
<dbReference type="InterPro" id="IPR007645">
    <property type="entry name" value="RNA_pol_Rpb2_3"/>
</dbReference>
<dbReference type="InterPro" id="IPR007641">
    <property type="entry name" value="RNA_pol_Rpb2_7"/>
</dbReference>
<dbReference type="InterPro" id="IPR014724">
    <property type="entry name" value="RNA_pol_RPB2_OB-fold"/>
</dbReference>
<dbReference type="NCBIfam" id="NF001616">
    <property type="entry name" value="PRK00405.1"/>
    <property type="match status" value="1"/>
</dbReference>
<dbReference type="NCBIfam" id="TIGR02013">
    <property type="entry name" value="rpoB"/>
    <property type="match status" value="1"/>
</dbReference>
<dbReference type="PANTHER" id="PTHR20856">
    <property type="entry name" value="DNA-DIRECTED RNA POLYMERASE I SUBUNIT 2"/>
    <property type="match status" value="1"/>
</dbReference>
<dbReference type="Pfam" id="PF04563">
    <property type="entry name" value="RNA_pol_Rpb2_1"/>
    <property type="match status" value="1"/>
</dbReference>
<dbReference type="Pfam" id="PF04561">
    <property type="entry name" value="RNA_pol_Rpb2_2"/>
    <property type="match status" value="2"/>
</dbReference>
<dbReference type="Pfam" id="PF04565">
    <property type="entry name" value="RNA_pol_Rpb2_3"/>
    <property type="match status" value="1"/>
</dbReference>
<dbReference type="Pfam" id="PF10385">
    <property type="entry name" value="RNA_pol_Rpb2_45"/>
    <property type="match status" value="1"/>
</dbReference>
<dbReference type="Pfam" id="PF00562">
    <property type="entry name" value="RNA_pol_Rpb2_6"/>
    <property type="match status" value="1"/>
</dbReference>
<dbReference type="Pfam" id="PF04560">
    <property type="entry name" value="RNA_pol_Rpb2_7"/>
    <property type="match status" value="1"/>
</dbReference>
<dbReference type="SUPFAM" id="SSF64484">
    <property type="entry name" value="beta and beta-prime subunits of DNA dependent RNA-polymerase"/>
    <property type="match status" value="1"/>
</dbReference>
<dbReference type="PROSITE" id="PS01166">
    <property type="entry name" value="RNA_POL_BETA"/>
    <property type="match status" value="1"/>
</dbReference>
<feature type="chain" id="PRO_0000329184" description="DNA-directed RNA polymerase subunit beta">
    <location>
        <begin position="1"/>
        <end position="1386"/>
    </location>
</feature>
<sequence>MLNSLQSGSRLRVDFSKIPQELDVPNLLQLQKSSYENFLMADSKSRENSGIEKVFRSVFPIHDPHNRISLEYAGSEIIKPKYTVRECMERGITYSVSLKMNIRLILWERDEKSGEKTGVKDVKEQSIYVRDIPYMTDRTSFIINGVERVVVNQLHRSPGVIFKEEEASTSSGTMIHTAQIIPDRGAWLYFEYDPKDILYVRINKRRKIPSTILFRALGYSKLDILKLFYPITKIIIKENKFFIEFRPEDFIGRVEFDVRDENGNLIVEAGKRLTKKKAQKLIEEGVKYIEFPLDVLMDRHLASPIIDQESGEVLYDTLTQLDEHKLKKILELGIDEFEIVNDIASGKDRAIINSFIADQESLKLLKQTEGIEDENDLAAIRIYKVMRPGEPVTKETAKAFIQQLFFDPERYDITRVGRMKMNHKLGLDVPEYVTVLTSEDIIKTVQYLIKVKNGQGHIDDRDHLGNRRIRAIGELLANELHSGLVKMQKAIRDKMSTISGSLDELMPHDLINSKMITNTILEFFATGQLSQFMDQTNPLSEITHKRRLSALGEGGLVKERAGFEVRDVHPTHYGRICPIETPEGQNIGLINTLSTYAKVNELGFIEAAYKVVKDGKITDEIVYLTAAQEEGKIIAPANTEIIDGNEIKGDYVEARKDGEIILVEKNKVELIDLTPRMVVGVAASLIPFLEHDDANRALMGSNMQRQAVPLLRTEAPIVGTGMEKVVARDAWESIRARRSGVVEKIDSENIYILGEDENGAYIDHYRLQKNLRTNQNTCFTQKPIVKKGQFVEAGQVITDGPNMDHAELALGKNMLVAFMPWNGYNFEDAIVVSERILRDDEFTSVHIYEKEIEARELKHGVEEITRDIPNVKEEEIEHLDESGIVKIGTYVKPGMILVGKVSPKGEVRPSPEERLLRAIFGEKAGHVVNKSLYCPQSMEGVVVDVKIFTKKGYDKDPRAIKAYEEEKERLSKEHHDKLLMIDREEMLKIISLLSKEPLEKDAKIKDKEFKAGEKISKEELSQINRFALNALVKSYAPEVQKKYNAIKTHFQNEKRKLTEEHEEKLAILEKEDILPSGVVKLVKVFIATKRKLKVGDKMAGRHGNKGIVSVIVPEIDMPYTKDGRIVDIVLNPLGVPSRMNIGQILEVHLGLIGKKLGEQIQEIFEAKRADFVKELRQKMIEIADVAKLMNAKETIEKMSDEELIEYARDWSKGVKFATPVFEGVTAEEFEKLYELAKMDLDGKTELYDGRTGEKFKERVTVGYMYMLKLHHLVDEKVHARSTGPYSLVTQQPVGGKALFGGQRFGEMEVWALEAHGAAHTLKEMLTIKSDDVEGRVAAYKAITKGEPIPQPGIPETLFVLTKELQSLGIDVEILDEVKDDEETGTN</sequence>
<organism>
    <name type="scientific">Nitratiruptor sp. (strain SB155-2)</name>
    <dbReference type="NCBI Taxonomy" id="387092"/>
    <lineage>
        <taxon>Bacteria</taxon>
        <taxon>Pseudomonadati</taxon>
        <taxon>Campylobacterota</taxon>
        <taxon>Epsilonproteobacteria</taxon>
        <taxon>Nautiliales</taxon>
        <taxon>Nitratiruptoraceae</taxon>
        <taxon>Nitratiruptor</taxon>
    </lineage>
</organism>
<accession>A6Q1M3</accession>
<reference key="1">
    <citation type="journal article" date="2007" name="Proc. Natl. Acad. Sci. U.S.A.">
        <title>Deep-sea vent epsilon-proteobacterial genomes provide insights into emergence of pathogens.</title>
        <authorList>
            <person name="Nakagawa S."/>
            <person name="Takaki Y."/>
            <person name="Shimamura S."/>
            <person name="Reysenbach A.-L."/>
            <person name="Takai K."/>
            <person name="Horikoshi K."/>
        </authorList>
    </citation>
    <scope>NUCLEOTIDE SEQUENCE [LARGE SCALE GENOMIC DNA]</scope>
    <source>
        <strain>SB155-2</strain>
    </source>
</reference>
<protein>
    <recommendedName>
        <fullName evidence="1">DNA-directed RNA polymerase subunit beta</fullName>
        <shortName evidence="1">RNAP subunit beta</shortName>
        <ecNumber evidence="1">2.7.7.6</ecNumber>
    </recommendedName>
    <alternativeName>
        <fullName evidence="1">RNA polymerase subunit beta</fullName>
    </alternativeName>
    <alternativeName>
        <fullName evidence="1">Transcriptase subunit beta</fullName>
    </alternativeName>
</protein>
<evidence type="ECO:0000255" key="1">
    <source>
        <dbReference type="HAMAP-Rule" id="MF_01321"/>
    </source>
</evidence>
<keyword id="KW-0240">DNA-directed RNA polymerase</keyword>
<keyword id="KW-0548">Nucleotidyltransferase</keyword>
<keyword id="KW-1185">Reference proteome</keyword>
<keyword id="KW-0804">Transcription</keyword>
<keyword id="KW-0808">Transferase</keyword>
<name>RPOB_NITSB</name>